<reference key="1">
    <citation type="journal article" date="2006" name="J. Bacteriol.">
        <title>The Methanosarcina barkeri genome: comparative analysis with Methanosarcina acetivorans and Methanosarcina mazei reveals extensive rearrangement within methanosarcinal genomes.</title>
        <authorList>
            <person name="Maeder D.L."/>
            <person name="Anderson I."/>
            <person name="Brettin T.S."/>
            <person name="Bruce D.C."/>
            <person name="Gilna P."/>
            <person name="Han C.S."/>
            <person name="Lapidus A."/>
            <person name="Metcalf W.W."/>
            <person name="Saunders E."/>
            <person name="Tapia R."/>
            <person name="Sowers K.R."/>
        </authorList>
    </citation>
    <scope>NUCLEOTIDE SEQUENCE [LARGE SCALE GENOMIC DNA]</scope>
    <source>
        <strain>Fusaro / DSM 804</strain>
    </source>
</reference>
<gene>
    <name type="ordered locus">Mbar_A0484</name>
</gene>
<dbReference type="EMBL" id="CP000099">
    <property type="protein sequence ID" value="AAZ69466.1"/>
    <property type="molecule type" value="Genomic_DNA"/>
</dbReference>
<dbReference type="SMR" id="Q46F76"/>
<dbReference type="STRING" id="269797.Mbar_A0484"/>
<dbReference type="PaxDb" id="269797-Mbar_A0484"/>
<dbReference type="KEGG" id="mba:Mbar_A0484"/>
<dbReference type="eggNOG" id="arCOG01486">
    <property type="taxonomic scope" value="Archaea"/>
</dbReference>
<dbReference type="HOGENOM" id="CLU_140789_0_0_2"/>
<dbReference type="OrthoDB" id="56459at2157"/>
<dbReference type="GO" id="GO:0046872">
    <property type="term" value="F:metal ion binding"/>
    <property type="evidence" value="ECO:0007669"/>
    <property type="project" value="UniProtKB-KW"/>
</dbReference>
<dbReference type="CDD" id="cd01027">
    <property type="entry name" value="TOPRIM_RNase_M5_like"/>
    <property type="match status" value="1"/>
</dbReference>
<dbReference type="Gene3D" id="3.40.1360.10">
    <property type="match status" value="1"/>
</dbReference>
<dbReference type="HAMAP" id="MF_01095">
    <property type="entry name" value="UPF0292"/>
    <property type="match status" value="1"/>
</dbReference>
<dbReference type="InterPro" id="IPR006171">
    <property type="entry name" value="TOPRIM_dom"/>
</dbReference>
<dbReference type="InterPro" id="IPR034141">
    <property type="entry name" value="TOPRIM_RNase_M5-like"/>
</dbReference>
<dbReference type="InterPro" id="IPR022972">
    <property type="entry name" value="UPF0292"/>
</dbReference>
<dbReference type="NCBIfam" id="NF003091">
    <property type="entry name" value="PRK04017.1-2"/>
    <property type="match status" value="1"/>
</dbReference>
<dbReference type="PANTHER" id="PTHR39964:SF2">
    <property type="entry name" value="UPF0292 PROTEIN MJ1624"/>
    <property type="match status" value="1"/>
</dbReference>
<dbReference type="PANTHER" id="PTHR39964">
    <property type="entry name" value="UPF0292 PROTEIN TK1411"/>
    <property type="match status" value="1"/>
</dbReference>
<dbReference type="Pfam" id="PF01751">
    <property type="entry name" value="Toprim"/>
    <property type="match status" value="1"/>
</dbReference>
<dbReference type="SMART" id="SM00493">
    <property type="entry name" value="TOPRIM"/>
    <property type="match status" value="1"/>
</dbReference>
<dbReference type="SUPFAM" id="SSF110455">
    <property type="entry name" value="Toprim domain"/>
    <property type="match status" value="1"/>
</dbReference>
<dbReference type="PROSITE" id="PS50880">
    <property type="entry name" value="TOPRIM"/>
    <property type="match status" value="1"/>
</dbReference>
<protein>
    <recommendedName>
        <fullName evidence="1">UPF0292 protein Mbar_A0484</fullName>
    </recommendedName>
</protein>
<keyword id="KW-0460">Magnesium</keyword>
<keyword id="KW-0479">Metal-binding</keyword>
<name>Y484_METBF</name>
<proteinExistence type="inferred from homology"/>
<sequence>MTDLEIYRKRLERIEELLSELSEYSGRGAIIIVEGKRDVLSLKRLGIEGNFELATHQSLFNFSEKIARLGNEVVILTDWDRRGDILAIKLSGYFQSFGLKPELEIRNKLRLISQKEIKDVESLYTYVSKLRLKTGYCSKRDFQ</sequence>
<evidence type="ECO:0000255" key="1">
    <source>
        <dbReference type="HAMAP-Rule" id="MF_01095"/>
    </source>
</evidence>
<feature type="chain" id="PRO_1000064938" description="UPF0292 protein Mbar_A0484">
    <location>
        <begin position="1"/>
        <end position="143"/>
    </location>
</feature>
<feature type="domain" description="Toprim" evidence="1">
    <location>
        <begin position="28"/>
        <end position="109"/>
    </location>
</feature>
<feature type="binding site" evidence="1">
    <location>
        <position position="34"/>
    </location>
    <ligand>
        <name>Mg(2+)</name>
        <dbReference type="ChEBI" id="CHEBI:18420"/>
        <label>1</label>
        <note>catalytic</note>
    </ligand>
</feature>
<feature type="binding site" evidence="1">
    <location>
        <position position="78"/>
    </location>
    <ligand>
        <name>Mg(2+)</name>
        <dbReference type="ChEBI" id="CHEBI:18420"/>
        <label>1</label>
        <note>catalytic</note>
    </ligand>
</feature>
<feature type="binding site" evidence="1">
    <location>
        <position position="78"/>
    </location>
    <ligand>
        <name>Mg(2+)</name>
        <dbReference type="ChEBI" id="CHEBI:18420"/>
        <label>2</label>
    </ligand>
</feature>
<feature type="binding site" evidence="1">
    <location>
        <position position="80"/>
    </location>
    <ligand>
        <name>Mg(2+)</name>
        <dbReference type="ChEBI" id="CHEBI:18420"/>
        <label>2</label>
    </ligand>
</feature>
<organism>
    <name type="scientific">Methanosarcina barkeri (strain Fusaro / DSM 804)</name>
    <dbReference type="NCBI Taxonomy" id="269797"/>
    <lineage>
        <taxon>Archaea</taxon>
        <taxon>Methanobacteriati</taxon>
        <taxon>Methanobacteriota</taxon>
        <taxon>Stenosarchaea group</taxon>
        <taxon>Methanomicrobia</taxon>
        <taxon>Methanosarcinales</taxon>
        <taxon>Methanosarcinaceae</taxon>
        <taxon>Methanosarcina</taxon>
    </lineage>
</organism>
<accession>Q46F76</accession>
<comment type="cofactor">
    <cofactor evidence="1">
        <name>Mg(2+)</name>
        <dbReference type="ChEBI" id="CHEBI:18420"/>
    </cofactor>
    <text evidence="1">Binds two Mg(2+) per subunit.</text>
</comment>
<comment type="similarity">
    <text evidence="1">Belongs to the UPF0292 family.</text>
</comment>